<keyword id="KW-0165">Cleavage on pair of basic residues</keyword>
<keyword id="KW-0333">Golgi apparatus</keyword>
<keyword id="KW-0527">Neuropeptide</keyword>
<keyword id="KW-1185">Reference proteome</keyword>
<keyword id="KW-0964">Secreted</keyword>
<keyword id="KW-0732">Signal</keyword>
<proteinExistence type="evidence at protein level"/>
<name>PCS1N_MOUSE</name>
<evidence type="ECO:0000250" key="1"/>
<evidence type="ECO:0000255" key="2"/>
<evidence type="ECO:0000256" key="3">
    <source>
        <dbReference type="SAM" id="MobiDB-lite"/>
    </source>
</evidence>
<evidence type="ECO:0000269" key="4">
    <source>
    </source>
</evidence>
<evidence type="ECO:0000269" key="5">
    <source>
    </source>
</evidence>
<evidence type="ECO:0000269" key="6">
    <source>
    </source>
</evidence>
<evidence type="ECO:0000269" key="7">
    <source>
    </source>
</evidence>
<evidence type="ECO:0000269" key="8">
    <source>
    </source>
</evidence>
<evidence type="ECO:0000269" key="9">
    <source>
    </source>
</evidence>
<evidence type="ECO:0000269" key="10">
    <source>
    </source>
</evidence>
<evidence type="ECO:0000269" key="11">
    <source>
    </source>
</evidence>
<evidence type="ECO:0000269" key="12">
    <source>
    </source>
</evidence>
<evidence type="ECO:0000269" key="13">
    <source>
    </source>
</evidence>
<evidence type="ECO:0000303" key="14">
    <source>
    </source>
</evidence>
<evidence type="ECO:0000305" key="15"/>
<organism>
    <name type="scientific">Mus musculus</name>
    <name type="common">Mouse</name>
    <dbReference type="NCBI Taxonomy" id="10090"/>
    <lineage>
        <taxon>Eukaryota</taxon>
        <taxon>Metazoa</taxon>
        <taxon>Chordata</taxon>
        <taxon>Craniata</taxon>
        <taxon>Vertebrata</taxon>
        <taxon>Euteleostomi</taxon>
        <taxon>Mammalia</taxon>
        <taxon>Eutheria</taxon>
        <taxon>Euarchontoglires</taxon>
        <taxon>Glires</taxon>
        <taxon>Rodentia</taxon>
        <taxon>Myomorpha</taxon>
        <taxon>Muroidea</taxon>
        <taxon>Muridae</taxon>
        <taxon>Murinae</taxon>
        <taxon>Mus</taxon>
        <taxon>Mus</taxon>
    </lineage>
</organism>
<reference key="1">
    <citation type="journal article" date="2000" name="J. Neurosci.">
        <title>Identification and characterization of proSAAS, a granin-like neuroendocrine peptide precursor that inhibits prohormone processing.</title>
        <authorList>
            <person name="Fricker L."/>
            <person name="McKinzie A.A."/>
            <person name="Sun J."/>
            <person name="Curran E."/>
            <person name="Qian Y."/>
            <person name="Yan L."/>
            <person name="Patterson S.D."/>
            <person name="Courchesne P.L."/>
            <person name="Richards B."/>
            <person name="Levin N."/>
            <person name="Mzhavia N."/>
            <person name="Devi L.A."/>
            <person name="Douglass J."/>
        </authorList>
    </citation>
    <scope>NUCLEOTIDE SEQUENCE [MRNA]</scope>
    <scope>FUNCTION</scope>
    <scope>PROTEOLYTIC PROCESSING (KEP; BIG SAAS; LITTLE SAAS; PEN AND LITTLE LEN)</scope>
    <scope>TISSUE SPECIFICITY</scope>
    <scope>SUBCELLULAR LOCATION</scope>
    <scope>IDENTIFICATION BY MASS SPECTROMETRY</scope>
</reference>
<reference key="2">
    <citation type="journal article" date="2004" name="Genome Res.">
        <title>The status, quality, and expansion of the NIH full-length cDNA project: the Mammalian Gene Collection (MGC).</title>
        <authorList>
            <consortium name="The MGC Project Team"/>
        </authorList>
    </citation>
    <scope>NUCLEOTIDE SEQUENCE [LARGE SCALE MRNA]</scope>
    <source>
        <strain>FVB/N</strain>
        <tissue>Colon</tissue>
    </source>
</reference>
<reference key="3">
    <citation type="journal article" date="1998" name="J. Biol. Chem.">
        <title>Identification of inhibitors of prohormone convertases 1 and 2 using a peptide combinatorial library.</title>
        <authorList>
            <person name="Apletalina E."/>
            <person name="Appel J."/>
            <person name="Lamango N.S."/>
            <person name="Houghten R.A."/>
            <person name="Lindberg I."/>
        </authorList>
    </citation>
    <scope>IDENTIFICATION OF PCSK1-INHIBITING HEXAPEPTIDE</scope>
</reference>
<reference key="4">
    <citation type="journal article" date="1998" name="Neuroendocrinology">
        <title>Molecular cloning and characterization of a highly basic protein, IA-4, expressed in pancreatic islets and brain.</title>
        <authorList>
            <person name="Donadel G."/>
            <person name="Marinos N."/>
            <person name="DeSilva M.G."/>
            <person name="Lu J."/>
            <person name="Notkins A.L."/>
            <person name="Lan M.S."/>
        </authorList>
    </citation>
    <scope>TISSUE SPECIFICITY</scope>
</reference>
<reference key="5">
    <citation type="journal article" date="2001" name="J. Biol. Chem.">
        <title>ProSAAS processing in mouse brain and pituitary.</title>
        <authorList>
            <person name="Mzhavia N."/>
            <person name="Berman Y."/>
            <person name="Che F.-Y."/>
            <person name="Fricker L.D."/>
            <person name="Devi L.A."/>
        </authorList>
    </citation>
    <scope>PROTEOLYTIC PROCESSING (LITTLE SAAS; PEN AND BIG LEN)</scope>
</reference>
<reference key="6">
    <citation type="journal article" date="2001" name="J. Neurochem.">
        <title>Tissue distribution and processing of proSAAS by proprotein convertases.</title>
        <authorList>
            <person name="Sayah M."/>
            <person name="Fortenberry Y."/>
            <person name="Cameron A."/>
            <person name="Lindberg I."/>
        </authorList>
    </citation>
    <scope>TISSUE SPECIFICITY</scope>
    <scope>PROTEOLYTIC PROCESSING</scope>
</reference>
<reference key="7">
    <citation type="journal article" date="2002" name="Biochem. J.">
        <title>Processing of proSAAS in neuroendocrine cell lines.</title>
        <authorList>
            <person name="Mzhavia N."/>
            <person name="Qian Y."/>
            <person name="Feng Y."/>
            <person name="Che F.-Y."/>
            <person name="Devi L.A."/>
            <person name="Fricker L.D."/>
        </authorList>
    </citation>
    <scope>FUNCTION</scope>
    <scope>PROTEOLYTIC PROCESSING (BIG SAAS; LITTLE SAAS; BIG PEN-LEN; PEN; PEN-20; PEN-19 AND BIG LEN)</scope>
    <scope>SUBCELLULAR LOCATION</scope>
</reference>
<reference key="8">
    <citation type="journal article" date="2002" name="Gene Expr. Patterns">
        <title>ProSAAS and prohormone convertase 1 are broadly expressed during mouse development.</title>
        <authorList>
            <person name="Feng Y."/>
            <person name="Reznik S.E."/>
            <person name="Fricker L.D."/>
        </authorList>
    </citation>
    <scope>DEVELOPMENTAL STAGE</scope>
</reference>
<reference key="9">
    <citation type="journal article" date="2002" name="J. Biol. Chem.">
        <title>Functional characterization of ProSAAS: similarities and differences with 7B2.</title>
        <authorList>
            <person name="Fortenberry Y."/>
            <person name="Hwang J.R."/>
            <person name="Apletalina E.V."/>
            <person name="Lindberg I."/>
        </authorList>
    </citation>
    <scope>FUNCTION</scope>
    <scope>PROTEOLYTIC PROCESSING (BIG PEN-LEN AND BIG LEN)</scope>
    <scope>MUTAGENESIS OF 241-LYS-ARG-242</scope>
</reference>
<reference key="10">
    <citation type="journal article" date="2006" name="Brain Res.">
        <title>Quantification of VGF- and pro-SAAS-derived peptides in endocrine tissues and the brain, and their regulation by diet and cold stress.</title>
        <authorList>
            <person name="Chakraborty T.R."/>
            <person name="Tkalych O."/>
            <person name="Nanno D."/>
            <person name="Garcia A.L."/>
            <person name="Devi L.A."/>
            <person name="Salton S.R."/>
        </authorList>
    </citation>
    <scope>TISSUE SPECIFICITY (PEN)</scope>
</reference>
<reference key="11">
    <citation type="journal article" date="2010" name="Cell">
        <title>A tissue-specific atlas of mouse protein phosphorylation and expression.</title>
        <authorList>
            <person name="Huttlin E.L."/>
            <person name="Jedrychowski M.P."/>
            <person name="Elias J.E."/>
            <person name="Goswami T."/>
            <person name="Rad R."/>
            <person name="Beausoleil S.A."/>
            <person name="Villen J."/>
            <person name="Haas W."/>
            <person name="Sowa M.E."/>
            <person name="Gygi S.P."/>
        </authorList>
    </citation>
    <scope>IDENTIFICATION BY MASS SPECTROMETRY [LARGE SCALE ANALYSIS]</scope>
    <source>
        <tissue>Brain</tissue>
    </source>
</reference>
<reference key="12">
    <citation type="journal article" date="2013" name="Proc. Natl. Acad. Sci. U.S.A.">
        <title>GPR171 is a hypothalamic G protein-coupled receptor for BigLEN, a neuropeptide involved in feeding.</title>
        <authorList>
            <person name="Gomes I."/>
            <person name="Aryal D.K."/>
            <person name="Wardman J.H."/>
            <person name="Gupta A."/>
            <person name="Gagnidze K."/>
            <person name="Rodriguiz R.M."/>
            <person name="Kumar S."/>
            <person name="Wetsel W.C."/>
            <person name="Pintar J.E."/>
            <person name="Fricker L.D."/>
            <person name="Devi L.A."/>
        </authorList>
    </citation>
    <scope>FUNCTION (BIG LEN)</scope>
</reference>
<reference key="13">
    <citation type="journal article" date="2016" name="Sci. Signal.">
        <title>Identification of GPR83 as the receptor for the neuroendocrine peptide PEN.</title>
        <authorList>
            <person name="Gomes I."/>
            <person name="Bobeck E.N."/>
            <person name="Margolis E.B."/>
            <person name="Gupta A."/>
            <person name="Sierra S."/>
            <person name="Fakira A.K."/>
            <person name="Fujita W."/>
            <person name="Mueller T.D."/>
            <person name="Mueller A."/>
            <person name="Tschoep M.H."/>
            <person name="Kleinau G."/>
            <person name="Fricker L.D."/>
            <person name="Devi L.A."/>
        </authorList>
    </citation>
    <scope>FUNCTION (PEN)</scope>
</reference>
<dbReference type="EMBL" id="AF181560">
    <property type="protein sequence ID" value="AAF22641.1"/>
    <property type="molecule type" value="mRNA"/>
</dbReference>
<dbReference type="EMBL" id="BC012263">
    <property type="protein sequence ID" value="AAH12263.1"/>
    <property type="molecule type" value="mRNA"/>
</dbReference>
<dbReference type="CCDS" id="CCDS29979.1"/>
<dbReference type="RefSeq" id="NP_038920.2">
    <property type="nucleotide sequence ID" value="NM_013892.3"/>
</dbReference>
<dbReference type="SMR" id="Q9QXV0"/>
<dbReference type="BioGRID" id="205954">
    <property type="interactions" value="4"/>
</dbReference>
<dbReference type="FunCoup" id="Q9QXV0">
    <property type="interactions" value="63"/>
</dbReference>
<dbReference type="IntAct" id="Q9QXV0">
    <property type="interactions" value="1"/>
</dbReference>
<dbReference type="STRING" id="10090.ENSMUSP00000040342"/>
<dbReference type="MEROPS" id="I49.001"/>
<dbReference type="GlyGen" id="Q9QXV0">
    <property type="glycosylation" value="2 sites, 1 O-linked glycan (1 site)"/>
</dbReference>
<dbReference type="iPTMnet" id="Q9QXV0"/>
<dbReference type="PhosphoSitePlus" id="Q9QXV0"/>
<dbReference type="CPTAC" id="non-CPTAC-3477"/>
<dbReference type="PaxDb" id="10090-ENSMUSP00000040342"/>
<dbReference type="PeptideAtlas" id="Q9QXV0"/>
<dbReference type="ProteomicsDB" id="287969"/>
<dbReference type="Antibodypedia" id="579">
    <property type="antibodies" value="87 antibodies from 19 providers"/>
</dbReference>
<dbReference type="DNASU" id="30052"/>
<dbReference type="Ensembl" id="ENSMUST00000041096.4">
    <property type="protein sequence ID" value="ENSMUSP00000040342.4"/>
    <property type="gene ID" value="ENSMUSG00000039278.11"/>
</dbReference>
<dbReference type="GeneID" id="30052"/>
<dbReference type="KEGG" id="mmu:30052"/>
<dbReference type="UCSC" id="uc009snf.2">
    <property type="organism name" value="mouse"/>
</dbReference>
<dbReference type="AGR" id="MGI:1353431"/>
<dbReference type="CTD" id="27344"/>
<dbReference type="MGI" id="MGI:1353431">
    <property type="gene designation" value="Pcsk1n"/>
</dbReference>
<dbReference type="VEuPathDB" id="HostDB:ENSMUSG00000039278"/>
<dbReference type="eggNOG" id="ENOG502RYS0">
    <property type="taxonomic scope" value="Eukaryota"/>
</dbReference>
<dbReference type="GeneTree" id="ENSGT00390000013488"/>
<dbReference type="HOGENOM" id="CLU_100077_0_0_1"/>
<dbReference type="InParanoid" id="Q9QXV0"/>
<dbReference type="OMA" id="VWGAPRT"/>
<dbReference type="OrthoDB" id="8962476at2759"/>
<dbReference type="PhylomeDB" id="Q9QXV0"/>
<dbReference type="TreeFam" id="TF338201"/>
<dbReference type="BioGRID-ORCS" id="30052">
    <property type="hits" value="4 hits in 81 CRISPR screens"/>
</dbReference>
<dbReference type="PRO" id="PR:Q9QXV0"/>
<dbReference type="Proteomes" id="UP000000589">
    <property type="component" value="Chromosome X"/>
</dbReference>
<dbReference type="RNAct" id="Q9QXV0">
    <property type="molecule type" value="protein"/>
</dbReference>
<dbReference type="Bgee" id="ENSMUSG00000039278">
    <property type="expression patterns" value="Expressed in entorhinal cortex and 157 other cell types or tissues"/>
</dbReference>
<dbReference type="GO" id="GO:0005615">
    <property type="term" value="C:extracellular space"/>
    <property type="evidence" value="ECO:0000314"/>
    <property type="project" value="MGI"/>
</dbReference>
<dbReference type="GO" id="GO:0030141">
    <property type="term" value="C:secretory granule"/>
    <property type="evidence" value="ECO:0000314"/>
    <property type="project" value="MGI"/>
</dbReference>
<dbReference type="GO" id="GO:0005802">
    <property type="term" value="C:trans-Golgi network"/>
    <property type="evidence" value="ECO:0000314"/>
    <property type="project" value="MGI"/>
</dbReference>
<dbReference type="GO" id="GO:0004867">
    <property type="term" value="F:serine-type endopeptidase inhibitor activity"/>
    <property type="evidence" value="ECO:0000314"/>
    <property type="project" value="MGI"/>
</dbReference>
<dbReference type="GO" id="GO:0007218">
    <property type="term" value="P:neuropeptide signaling pathway"/>
    <property type="evidence" value="ECO:0007669"/>
    <property type="project" value="UniProtKB-KW"/>
</dbReference>
<dbReference type="GO" id="GO:0016486">
    <property type="term" value="P:peptide hormone processing"/>
    <property type="evidence" value="ECO:0000314"/>
    <property type="project" value="MGI"/>
</dbReference>
<dbReference type="GO" id="GO:0009409">
    <property type="term" value="P:response to cold"/>
    <property type="evidence" value="ECO:0000314"/>
    <property type="project" value="MGI"/>
</dbReference>
<dbReference type="GO" id="GO:0002021">
    <property type="term" value="P:response to dietary excess"/>
    <property type="evidence" value="ECO:0000314"/>
    <property type="project" value="MGI"/>
</dbReference>
<dbReference type="InterPro" id="IPR010832">
    <property type="entry name" value="ProSAAS"/>
</dbReference>
<dbReference type="PANTHER" id="PTHR15531">
    <property type="entry name" value="PROSAAS"/>
    <property type="match status" value="1"/>
</dbReference>
<dbReference type="PANTHER" id="PTHR15531:SF0">
    <property type="entry name" value="PROSAAS"/>
    <property type="match status" value="1"/>
</dbReference>
<dbReference type="Pfam" id="PF07259">
    <property type="entry name" value="ProSAAS"/>
    <property type="match status" value="1"/>
</dbReference>
<sequence length="258" mass="27270">MAGSPLLCGPRAGGVGILVLLLLGLLRLPPTLSARPVKEPRSLSAASAPLVETSTPLRLRRAVPRGEAAGAVQELARALAHLLEAERQERARAEAQEAEDQQARVLAQLLRAWGSPRASDPPLAPDDDPDAPAAQLARALLRARLDPAALAAQLVPAPAAAPRPRPPVYDDGPTGPDVEDAGDETPDVDPELLRYLLGRILTGSSEPEAAPAPRRLRRSVDQDLGPEVPPENVLGALLRVKRLENPSPQAPARRLLPP</sequence>
<feature type="signal peptide" evidence="2">
    <location>
        <begin position="1"/>
        <end position="33"/>
    </location>
</feature>
<feature type="chain" id="PRO_0000259681" description="ProSAAS">
    <location>
        <begin position="34"/>
        <end position="258"/>
    </location>
</feature>
<feature type="peptide" id="PRO_0000259683" description="Big SAAS">
    <location>
        <begin position="34"/>
        <end position="59"/>
    </location>
</feature>
<feature type="peptide" id="PRO_0000259682" description="KEP">
    <location>
        <begin position="34"/>
        <end position="40"/>
    </location>
</feature>
<feature type="peptide" id="PRO_0000259684" description="Little SAAS">
    <location>
        <begin position="42"/>
        <end position="59"/>
    </location>
</feature>
<feature type="peptide" id="PRO_0000259685" description="Big PEN-LEN">
    <location>
        <begin position="219"/>
        <end position="258"/>
    </location>
</feature>
<feature type="peptide" id="PRO_0000259686" description="PEN">
    <location>
        <begin position="219"/>
        <end position="240"/>
    </location>
</feature>
<feature type="peptide" id="PRO_0000259687" description="PEN-20">
    <location>
        <begin position="219"/>
        <end position="238"/>
    </location>
</feature>
<feature type="peptide" id="PRO_0000259688" description="PEN-19">
    <location>
        <begin position="219"/>
        <end position="237"/>
    </location>
</feature>
<feature type="peptide" id="PRO_0000259690" description="Big LEN">
    <location>
        <begin position="243"/>
        <end position="258"/>
    </location>
</feature>
<feature type="peptide" id="PRO_0000259689" description="Little LEN">
    <location>
        <begin position="243"/>
        <end position="252"/>
    </location>
</feature>
<feature type="region of interest" description="ProSAAS(1-180)">
    <location>
        <begin position="34"/>
        <end position="213"/>
    </location>
</feature>
<feature type="region of interest" description="Disordered" evidence="3">
    <location>
        <begin position="156"/>
        <end position="188"/>
    </location>
</feature>
<feature type="region of interest" description="Disordered" evidence="3">
    <location>
        <begin position="204"/>
        <end position="230"/>
    </location>
</feature>
<feature type="region of interest" description="C-terminal inhibitory domain; interacts with PCSK1">
    <location>
        <begin position="219"/>
        <end position="258"/>
    </location>
</feature>
<feature type="region of interest" description="Disordered" evidence="3">
    <location>
        <begin position="239"/>
        <end position="258"/>
    </location>
</feature>
<feature type="short sequence motif" description="Sufficient for inhibition of PCSK1">
    <location>
        <begin position="237"/>
        <end position="242"/>
    </location>
</feature>
<feature type="compositionally biased region" description="Acidic residues" evidence="3">
    <location>
        <begin position="177"/>
        <end position="188"/>
    </location>
</feature>
<feature type="compositionally biased region" description="Low complexity" evidence="3">
    <location>
        <begin position="204"/>
        <end position="213"/>
    </location>
</feature>
<feature type="mutagenesis site" description="Abolishes inhibition of PCSK1." evidence="7">
    <original>KR</original>
    <variation>SS</variation>
    <location>
        <begin position="241"/>
        <end position="242"/>
    </location>
</feature>
<feature type="sequence conflict" description="In Ref. 1; AAF22641." evidence="15" ref="1">
    <original>L</original>
    <variation>Q</variation>
    <location>
        <position position="83"/>
    </location>
</feature>
<gene>
    <name type="primary">Pcsk1n</name>
</gene>
<accession>Q9QXV0</accession>
<accession>Q91W26</accession>
<protein>
    <recommendedName>
        <fullName>ProSAAS</fullName>
    </recommendedName>
    <alternativeName>
        <fullName>IA-4</fullName>
    </alternativeName>
    <alternativeName>
        <fullName>Proprotein convertase subtilisin/kexin type 1 inhibitor</fullName>
        <shortName>Proprotein convertase 1 inhibitor</shortName>
    </alternativeName>
    <alternativeName>
        <fullName>pro-SAAS</fullName>
    </alternativeName>
    <component>
        <recommendedName>
            <fullName>KEP</fullName>
        </recommendedName>
    </component>
    <component>
        <recommendedName>
            <fullName>Big SAAS</fullName>
            <shortName>b-SAAS</shortName>
        </recommendedName>
    </component>
    <component>
        <recommendedName>
            <fullName>Little SAAS</fullName>
            <shortName>l-SAAS</shortName>
        </recommendedName>
    </component>
    <component>
        <recommendedName>
            <fullName>Big PEN-LEN</fullName>
            <shortName>b-PEN-LEN</shortName>
        </recommendedName>
        <alternativeName>
            <fullName>SAAS CT(1-49)</fullName>
        </alternativeName>
    </component>
    <component>
        <recommendedName>
            <fullName>PEN</fullName>
        </recommendedName>
    </component>
    <component>
        <recommendedName>
            <fullName>PEN-20</fullName>
        </recommendedName>
    </component>
    <component>
        <recommendedName>
            <fullName>PEN-19</fullName>
        </recommendedName>
    </component>
    <component>
        <recommendedName>
            <fullName>Little LEN</fullName>
            <shortName>l-LEN</shortName>
        </recommendedName>
    </component>
    <component>
        <recommendedName>
            <fullName>Big LEN</fullName>
            <shortName>b-LEN</shortName>
        </recommendedName>
        <alternativeName>
            <fullName evidence="14">BigLEN</fullName>
        </alternativeName>
        <alternativeName>
            <fullName>SAAS CT(25-40)</fullName>
        </alternativeName>
    </component>
</protein>
<comment type="function">
    <text evidence="4 7 8">May function in the control of the neuroendocrine secretory pathway. Proposed be a specific endogenous inhibitor of PCSK1. ProSAAS and Big PEN-LEN, both containing the C-terminal inhibitory domain, but not the processed peptides reduce PCSK1 activity in the endoplasmic reticulum and Golgi. It reduces the activity of the 87 kDa form but not the autocatalytically derived 66 kDa form of PCSK1. Subsequent processing of proSAAS may eliminate the inhibition. Slows down convertase-mediated processing of proopiomelanocortin and proenkephalin. May control the intracellular timing of PCSK1 rather than its total level of activity.</text>
</comment>
<comment type="function">
    <molecule>Big LEN</molecule>
    <text evidence="11">Endogenous ligand for GPR171 (PubMed:24043826). Neuropeptide involved in the regulation of feeding (PubMed:24043826).</text>
</comment>
<comment type="function">
    <molecule>PEN</molecule>
    <text evidence="12">Endogenous ligand for GPR171. Neuropeptide involved in the regulation of feeding.</text>
</comment>
<comment type="subunit">
    <text evidence="1">Interacts via the C-terminal inhibitory domain with PCSK1 66 kDa form.</text>
</comment>
<comment type="subcellular location">
    <subcellularLocation>
        <location evidence="4 8">Secreted</location>
    </subcellularLocation>
    <subcellularLocation>
        <location evidence="8">Golgi apparatus</location>
        <location evidence="8">trans-Golgi network</location>
    </subcellularLocation>
</comment>
<comment type="tissue specificity">
    <text evidence="4 6 13">Expressed in brain (mostly hypothalamus and pituitary) and gut. Expressed in trigeminal ganglia and neuroendocrine cell lines.</text>
</comment>
<comment type="tissue specificity">
    <molecule>PEN</molecule>
    <text evidence="10">Expressed in pancreas, spinal cord and brain (most abundant in striatum, hippocampus, pons and medulla, and cortex) (at protein level).</text>
</comment>
<comment type="developmental stage">
    <text evidence="9">Broadly expressed from 9 dpc to 11 dpc, with some enrichment in neural tube-derived tissues. By 15 dpc, the expression is largely restricted to neuroendocrine tissues.</text>
</comment>
<comment type="domain">
    <text>ProSAAS(1-180) increases secretion of enzymatically inactive PCSK1.</text>
</comment>
<comment type="domain">
    <text>The C-terminal inhibitory domain is involved in inhibition of PCSK1. It corresponds to the probable processing intermediate Big PEN-LEN, binds to PCSK1 in vitro and contains the hexapeptide L-L-R-V-K-R, which, as a synthetic peptide, is sufficient for PCSK1 inhibition.</text>
</comment>
<comment type="domain">
    <molecule>Big LEN</molecule>
    <text evidence="11">The four C-terminal amino acids of Big LEN are sufficient to bind and activate GPR171.</text>
</comment>
<comment type="PTM">
    <text evidence="4 5 6 7 8">Proteolytically cleaved in the Golgi. Little SAAS, PEN, PEN-20 and Big LEN are the major processed peptides in proSAAS-overexpressing AtT-20 pituitary corticotropic cell line.</text>
</comment>